<proteinExistence type="inferred from homology"/>
<keyword id="KW-0997">Cell inner membrane</keyword>
<keyword id="KW-1003">Cell membrane</keyword>
<keyword id="KW-0143">Chaperone</keyword>
<keyword id="KW-0472">Membrane</keyword>
<keyword id="KW-0653">Protein transport</keyword>
<keyword id="KW-1185">Reference proteome</keyword>
<keyword id="KW-0812">Transmembrane</keyword>
<keyword id="KW-1133">Transmembrane helix</keyword>
<keyword id="KW-0813">Transport</keyword>
<organism>
    <name type="scientific">Escherichia coli O139:H28 (strain E24377A / ETEC)</name>
    <dbReference type="NCBI Taxonomy" id="331111"/>
    <lineage>
        <taxon>Bacteria</taxon>
        <taxon>Pseudomonadati</taxon>
        <taxon>Pseudomonadota</taxon>
        <taxon>Gammaproteobacteria</taxon>
        <taxon>Enterobacterales</taxon>
        <taxon>Enterobacteriaceae</taxon>
        <taxon>Escherichia</taxon>
    </lineage>
</organism>
<comment type="function">
    <text evidence="1">Required for the insertion and/or proper folding and/or complex formation of integral membrane proteins into the membrane. Involved in integration of membrane proteins that insert both dependently and independently of the Sec translocase complex, as well as at least some lipoproteins. Aids folding of multispanning membrane proteins.</text>
</comment>
<comment type="subunit">
    <text evidence="1">Interacts with the Sec translocase complex via SecD. Specifically interacts with transmembrane segments of nascent integral membrane proteins during membrane integration.</text>
</comment>
<comment type="subcellular location">
    <subcellularLocation>
        <location evidence="1">Cell inner membrane</location>
        <topology evidence="1">Multi-pass membrane protein</topology>
    </subcellularLocation>
</comment>
<comment type="similarity">
    <text evidence="1">Belongs to the OXA1/ALB3/YidC family. Type 1 subfamily.</text>
</comment>
<reference key="1">
    <citation type="journal article" date="2008" name="J. Bacteriol.">
        <title>The pangenome structure of Escherichia coli: comparative genomic analysis of E. coli commensal and pathogenic isolates.</title>
        <authorList>
            <person name="Rasko D.A."/>
            <person name="Rosovitz M.J."/>
            <person name="Myers G.S.A."/>
            <person name="Mongodin E.F."/>
            <person name="Fricke W.F."/>
            <person name="Gajer P."/>
            <person name="Crabtree J."/>
            <person name="Sebaihia M."/>
            <person name="Thomson N.R."/>
            <person name="Chaudhuri R."/>
            <person name="Henderson I.R."/>
            <person name="Sperandio V."/>
            <person name="Ravel J."/>
        </authorList>
    </citation>
    <scope>NUCLEOTIDE SEQUENCE [LARGE SCALE GENOMIC DNA]</scope>
    <source>
        <strain>E24377A / ETEC</strain>
    </source>
</reference>
<dbReference type="EMBL" id="CP000800">
    <property type="protein sequence ID" value="ABV17793.1"/>
    <property type="molecule type" value="Genomic_DNA"/>
</dbReference>
<dbReference type="RefSeq" id="WP_000378267.1">
    <property type="nucleotide sequence ID" value="NC_009801.1"/>
</dbReference>
<dbReference type="SMR" id="A7ZTR1"/>
<dbReference type="KEGG" id="ecw:EcE24377A_4215"/>
<dbReference type="HOGENOM" id="CLU_016535_3_0_6"/>
<dbReference type="Proteomes" id="UP000001122">
    <property type="component" value="Chromosome"/>
</dbReference>
<dbReference type="GO" id="GO:0005886">
    <property type="term" value="C:plasma membrane"/>
    <property type="evidence" value="ECO:0007669"/>
    <property type="project" value="UniProtKB-SubCell"/>
</dbReference>
<dbReference type="GO" id="GO:0032977">
    <property type="term" value="F:membrane insertase activity"/>
    <property type="evidence" value="ECO:0007669"/>
    <property type="project" value="InterPro"/>
</dbReference>
<dbReference type="GO" id="GO:0051205">
    <property type="term" value="P:protein insertion into membrane"/>
    <property type="evidence" value="ECO:0007669"/>
    <property type="project" value="TreeGrafter"/>
</dbReference>
<dbReference type="GO" id="GO:0015031">
    <property type="term" value="P:protein transport"/>
    <property type="evidence" value="ECO:0007669"/>
    <property type="project" value="UniProtKB-KW"/>
</dbReference>
<dbReference type="CDD" id="cd20070">
    <property type="entry name" value="5TM_YidC_Alb3"/>
    <property type="match status" value="1"/>
</dbReference>
<dbReference type="CDD" id="cd19961">
    <property type="entry name" value="EcYidC-like_peri"/>
    <property type="match status" value="1"/>
</dbReference>
<dbReference type="FunFam" id="2.70.98.90:FF:000001">
    <property type="entry name" value="Membrane protein insertase YidC"/>
    <property type="match status" value="1"/>
</dbReference>
<dbReference type="Gene3D" id="2.70.98.90">
    <property type="match status" value="1"/>
</dbReference>
<dbReference type="HAMAP" id="MF_01810">
    <property type="entry name" value="YidC_type1"/>
    <property type="match status" value="1"/>
</dbReference>
<dbReference type="InterPro" id="IPR019998">
    <property type="entry name" value="Membr_insert_YidC"/>
</dbReference>
<dbReference type="InterPro" id="IPR028053">
    <property type="entry name" value="Membr_insert_YidC_N"/>
</dbReference>
<dbReference type="InterPro" id="IPR001708">
    <property type="entry name" value="YidC/ALB3/OXA1/COX18"/>
</dbReference>
<dbReference type="InterPro" id="IPR028055">
    <property type="entry name" value="YidC/Oxa/ALB_C"/>
</dbReference>
<dbReference type="InterPro" id="IPR047196">
    <property type="entry name" value="YidC_ALB_C"/>
</dbReference>
<dbReference type="InterPro" id="IPR038221">
    <property type="entry name" value="YidC_periplasmic_sf"/>
</dbReference>
<dbReference type="NCBIfam" id="NF002351">
    <property type="entry name" value="PRK01318.1-1"/>
    <property type="match status" value="1"/>
</dbReference>
<dbReference type="NCBIfam" id="NF002352">
    <property type="entry name" value="PRK01318.1-3"/>
    <property type="match status" value="1"/>
</dbReference>
<dbReference type="NCBIfam" id="NF002353">
    <property type="entry name" value="PRK01318.1-4"/>
    <property type="match status" value="1"/>
</dbReference>
<dbReference type="NCBIfam" id="TIGR03593">
    <property type="entry name" value="yidC_nterm"/>
    <property type="match status" value="1"/>
</dbReference>
<dbReference type="NCBIfam" id="TIGR03592">
    <property type="entry name" value="yidC_oxa1_cterm"/>
    <property type="match status" value="1"/>
</dbReference>
<dbReference type="PANTHER" id="PTHR12428:SF65">
    <property type="entry name" value="CYTOCHROME C OXIDASE ASSEMBLY PROTEIN COX18, MITOCHONDRIAL"/>
    <property type="match status" value="1"/>
</dbReference>
<dbReference type="PANTHER" id="PTHR12428">
    <property type="entry name" value="OXA1"/>
    <property type="match status" value="1"/>
</dbReference>
<dbReference type="Pfam" id="PF02096">
    <property type="entry name" value="60KD_IMP"/>
    <property type="match status" value="1"/>
</dbReference>
<dbReference type="Pfam" id="PF14849">
    <property type="entry name" value="YidC_periplas"/>
    <property type="match status" value="1"/>
</dbReference>
<dbReference type="PRINTS" id="PR00701">
    <property type="entry name" value="60KDINNERMP"/>
</dbReference>
<dbReference type="PRINTS" id="PR01900">
    <property type="entry name" value="YIDCPROTEIN"/>
</dbReference>
<feature type="chain" id="PRO_1000070085" description="Membrane protein insertase YidC">
    <location>
        <begin position="1"/>
        <end position="548"/>
    </location>
</feature>
<feature type="transmembrane region" description="Helical" evidence="1">
    <location>
        <begin position="6"/>
        <end position="26"/>
    </location>
</feature>
<feature type="transmembrane region" description="Helical" evidence="1">
    <location>
        <begin position="350"/>
        <end position="370"/>
    </location>
</feature>
<feature type="transmembrane region" description="Helical" evidence="1">
    <location>
        <begin position="420"/>
        <end position="440"/>
    </location>
</feature>
<feature type="transmembrane region" description="Helical" evidence="1">
    <location>
        <begin position="458"/>
        <end position="478"/>
    </location>
</feature>
<feature type="transmembrane region" description="Helical" evidence="1">
    <location>
        <begin position="499"/>
        <end position="519"/>
    </location>
</feature>
<feature type="region of interest" description="Disordered" evidence="2">
    <location>
        <begin position="28"/>
        <end position="55"/>
    </location>
</feature>
<feature type="compositionally biased region" description="Low complexity" evidence="2">
    <location>
        <begin position="30"/>
        <end position="50"/>
    </location>
</feature>
<accession>A7ZTR1</accession>
<evidence type="ECO:0000255" key="1">
    <source>
        <dbReference type="HAMAP-Rule" id="MF_01810"/>
    </source>
</evidence>
<evidence type="ECO:0000256" key="2">
    <source>
        <dbReference type="SAM" id="MobiDB-lite"/>
    </source>
</evidence>
<gene>
    <name evidence="1" type="primary">yidC</name>
    <name type="ordered locus">EcE24377A_4215</name>
</gene>
<name>YIDC_ECO24</name>
<protein>
    <recommendedName>
        <fullName evidence="1">Membrane protein insertase YidC</fullName>
    </recommendedName>
    <alternativeName>
        <fullName evidence="1">Foldase YidC</fullName>
    </alternativeName>
    <alternativeName>
        <fullName evidence="1">Membrane integrase YidC</fullName>
    </alternativeName>
    <alternativeName>
        <fullName evidence="1">Membrane protein YidC</fullName>
    </alternativeName>
</protein>
<sequence>MDSQRNLLVIALLFVSFMIWQAWEQDKNPQPQAQQTTQTTTTAAGSAADQGVPASGQGKLISVKTDVLDLTINTRGGDVEQALLPAYPKELNSTQPFQLLETSSQFIYQAQSGLTGRDGPDNPANGPRPLYNVEKDAYVLAEGQNELQVPMTYTDAAGNTFTKTFVLKRGDYAVNVNYNVQNAGEKPLEISTFGQLKQSITLPPHLDTGSSNFALHTFRGAAYSTPDEKYEKYKFDTIADNENLNISSKGGWVAMLQQYFATAWIPHNDGTNNFYTANLGNGIAAIGYKSQPVLVQPGQTGAMNSTLWVGPEIQDKMAAVAPHLDLTVDYGWLWFISQPLFKLLKWIHSFVGNWGFSIIIITFIVRGIMYPLTKAQYTSMAKMRMLQPKIQAMRERLGDDKQRISQEMMALYKAEKVNPLGGCFPLLIQMPIFLALYYMLMGSVELRQAPFALWIHDLSAQDPYYILPILMGVTMFFIQKMSPTTVTDPMQQKIMTFMPVIFTVFFLWFPSGLVLYYIVSNLVTIIQQQLIYRGLEKRGLHSREKKKS</sequence>